<name>DPOL_MONPV</name>
<feature type="chain" id="PRO_0000457696" description="DNA polymerase">
    <location>
        <begin position="1"/>
        <end position="1006"/>
    </location>
</feature>
<feature type="strand" evidence="8">
    <location>
        <begin position="2"/>
        <end position="10"/>
    </location>
</feature>
<feature type="strand" evidence="8">
    <location>
        <begin position="13"/>
        <end position="15"/>
    </location>
</feature>
<feature type="strand" evidence="8">
    <location>
        <begin position="17"/>
        <end position="23"/>
    </location>
</feature>
<feature type="strand" evidence="8">
    <location>
        <begin position="25"/>
        <end position="27"/>
    </location>
</feature>
<feature type="strand" evidence="8">
    <location>
        <begin position="29"/>
        <end position="35"/>
    </location>
</feature>
<feature type="strand" evidence="8">
    <location>
        <begin position="38"/>
        <end position="42"/>
    </location>
</feature>
<feature type="helix" evidence="8">
    <location>
        <begin position="44"/>
        <end position="48"/>
    </location>
</feature>
<feature type="strand" evidence="8">
    <location>
        <begin position="55"/>
        <end position="67"/>
    </location>
</feature>
<feature type="strand" evidence="8">
    <location>
        <begin position="72"/>
        <end position="76"/>
    </location>
</feature>
<feature type="strand" evidence="8">
    <location>
        <begin position="83"/>
        <end position="95"/>
    </location>
</feature>
<feature type="helix" evidence="8">
    <location>
        <begin position="109"/>
        <end position="116"/>
    </location>
</feature>
<feature type="strand" evidence="8">
    <location>
        <begin position="124"/>
        <end position="126"/>
    </location>
</feature>
<feature type="strand" evidence="8">
    <location>
        <begin position="131"/>
        <end position="136"/>
    </location>
</feature>
<feature type="strand" evidence="8">
    <location>
        <begin position="139"/>
        <end position="143"/>
    </location>
</feature>
<feature type="helix" evidence="8">
    <location>
        <begin position="145"/>
        <end position="148"/>
    </location>
</feature>
<feature type="strand" evidence="8">
    <location>
        <begin position="151"/>
        <end position="153"/>
    </location>
</feature>
<feature type="strand" evidence="8">
    <location>
        <begin position="162"/>
        <end position="169"/>
    </location>
</feature>
<feature type="strand" evidence="8">
    <location>
        <begin position="172"/>
        <end position="175"/>
    </location>
</feature>
<feature type="turn" evidence="8">
    <location>
        <begin position="178"/>
        <end position="180"/>
    </location>
</feature>
<feature type="strand" evidence="8">
    <location>
        <begin position="183"/>
        <end position="191"/>
    </location>
</feature>
<feature type="strand" evidence="8">
    <location>
        <begin position="197"/>
        <end position="204"/>
    </location>
</feature>
<feature type="helix" evidence="8">
    <location>
        <begin position="205"/>
        <end position="207"/>
    </location>
</feature>
<feature type="helix" evidence="8">
    <location>
        <begin position="210"/>
        <end position="218"/>
    </location>
</feature>
<feature type="strand" evidence="8">
    <location>
        <begin position="225"/>
        <end position="227"/>
    </location>
</feature>
<feature type="strand" evidence="8">
    <location>
        <begin position="235"/>
        <end position="239"/>
    </location>
</feature>
<feature type="helix" evidence="8">
    <location>
        <begin position="241"/>
        <end position="252"/>
    </location>
</feature>
<feature type="strand" evidence="8">
    <location>
        <begin position="257"/>
        <end position="263"/>
    </location>
</feature>
<feature type="turn" evidence="8">
    <location>
        <begin position="264"/>
        <end position="267"/>
    </location>
</feature>
<feature type="helix" evidence="8">
    <location>
        <begin position="268"/>
        <end position="279"/>
    </location>
</feature>
<feature type="strand" evidence="8">
    <location>
        <begin position="285"/>
        <end position="287"/>
    </location>
</feature>
<feature type="strand" evidence="8">
    <location>
        <begin position="294"/>
        <end position="296"/>
    </location>
</feature>
<feature type="strand" evidence="8">
    <location>
        <begin position="299"/>
        <end position="305"/>
    </location>
</feature>
<feature type="strand" evidence="4">
    <location>
        <begin position="308"/>
        <end position="311"/>
    </location>
</feature>
<feature type="strand" evidence="8">
    <location>
        <begin position="313"/>
        <end position="320"/>
    </location>
</feature>
<feature type="strand" evidence="8">
    <location>
        <begin position="327"/>
        <end position="330"/>
    </location>
</feature>
<feature type="helix" evidence="8">
    <location>
        <begin position="331"/>
        <end position="338"/>
    </location>
</feature>
<feature type="helix" evidence="8">
    <location>
        <begin position="346"/>
        <end position="353"/>
    </location>
</feature>
<feature type="strand" evidence="8">
    <location>
        <begin position="356"/>
        <end position="362"/>
    </location>
</feature>
<feature type="strand" evidence="8">
    <location>
        <begin position="365"/>
        <end position="372"/>
    </location>
</feature>
<feature type="turn" evidence="8">
    <location>
        <begin position="374"/>
        <end position="376"/>
    </location>
</feature>
<feature type="strand" evidence="6">
    <location>
        <begin position="377"/>
        <end position="380"/>
    </location>
</feature>
<feature type="helix" evidence="8">
    <location>
        <begin position="381"/>
        <end position="389"/>
    </location>
</feature>
<feature type="strand" evidence="8">
    <location>
        <begin position="394"/>
        <end position="397"/>
    </location>
</feature>
<feature type="turn" evidence="8">
    <location>
        <begin position="398"/>
        <end position="400"/>
    </location>
</feature>
<feature type="strand" evidence="8">
    <location>
        <begin position="401"/>
        <end position="410"/>
    </location>
</feature>
<feature type="strand" evidence="8">
    <location>
        <begin position="412"/>
        <end position="420"/>
    </location>
</feature>
<feature type="strand" evidence="8">
    <location>
        <begin position="427"/>
        <end position="432"/>
    </location>
</feature>
<feature type="helix" evidence="8">
    <location>
        <begin position="440"/>
        <end position="445"/>
    </location>
</feature>
<feature type="helix" evidence="8">
    <location>
        <begin position="449"/>
        <end position="473"/>
    </location>
</feature>
<feature type="helix" evidence="8">
    <location>
        <begin position="475"/>
        <end position="486"/>
    </location>
</feature>
<feature type="helix" evidence="8">
    <location>
        <begin position="490"/>
        <end position="492"/>
    </location>
</feature>
<feature type="strand" evidence="8">
    <location>
        <begin position="493"/>
        <end position="496"/>
    </location>
</feature>
<feature type="helix" evidence="8">
    <location>
        <begin position="498"/>
        <end position="513"/>
    </location>
</feature>
<feature type="strand" evidence="8">
    <location>
        <begin position="515"/>
        <end position="518"/>
    </location>
</feature>
<feature type="strand" evidence="4">
    <location>
        <begin position="537"/>
        <end position="539"/>
    </location>
</feature>
<feature type="turn" evidence="3">
    <location>
        <begin position="541"/>
        <end position="543"/>
    </location>
</feature>
<feature type="strand" evidence="8">
    <location>
        <begin position="545"/>
        <end position="550"/>
    </location>
</feature>
<feature type="helix" evidence="8">
    <location>
        <begin position="553"/>
        <end position="561"/>
    </location>
</feature>
<feature type="turn" evidence="8">
    <location>
        <begin position="565"/>
        <end position="567"/>
    </location>
</feature>
<feature type="strand" evidence="8">
    <location>
        <begin position="568"/>
        <end position="576"/>
    </location>
</feature>
<feature type="helix" evidence="8">
    <location>
        <begin position="577"/>
        <end position="590"/>
    </location>
</feature>
<feature type="turn" evidence="8">
    <location>
        <begin position="593"/>
        <end position="595"/>
    </location>
</feature>
<feature type="strand" evidence="8">
    <location>
        <begin position="596"/>
        <end position="601"/>
    </location>
</feature>
<feature type="strand" evidence="8">
    <location>
        <begin position="604"/>
        <end position="607"/>
    </location>
</feature>
<feature type="strand" evidence="8">
    <location>
        <begin position="609"/>
        <end position="616"/>
    </location>
</feature>
<feature type="helix" evidence="8">
    <location>
        <begin position="622"/>
        <end position="642"/>
    </location>
</feature>
<feature type="helix" evidence="8">
    <location>
        <begin position="647"/>
        <end position="671"/>
    </location>
</feature>
<feature type="strand" evidence="4">
    <location>
        <begin position="676"/>
        <end position="678"/>
    </location>
</feature>
<feature type="helix" evidence="8">
    <location>
        <begin position="681"/>
        <end position="702"/>
    </location>
</feature>
<feature type="strand" evidence="8">
    <location>
        <begin position="705"/>
        <end position="708"/>
    </location>
</feature>
<feature type="strand" evidence="8">
    <location>
        <begin position="711"/>
        <end position="713"/>
    </location>
</feature>
<feature type="strand" evidence="8">
    <location>
        <begin position="721"/>
        <end position="723"/>
    </location>
</feature>
<feature type="strand" evidence="8">
    <location>
        <begin position="731"/>
        <end position="734"/>
    </location>
</feature>
<feature type="strand" evidence="6">
    <location>
        <begin position="739"/>
        <end position="741"/>
    </location>
</feature>
<feature type="strand" evidence="8">
    <location>
        <begin position="743"/>
        <end position="751"/>
    </location>
</feature>
<feature type="strand" evidence="8">
    <location>
        <begin position="754"/>
        <end position="760"/>
    </location>
</feature>
<feature type="helix" evidence="8">
    <location>
        <begin position="764"/>
        <end position="780"/>
    </location>
</feature>
<feature type="strand" evidence="8">
    <location>
        <begin position="789"/>
        <end position="802"/>
    </location>
</feature>
<feature type="strand" evidence="8">
    <location>
        <begin position="805"/>
        <end position="812"/>
    </location>
</feature>
<feature type="strand" evidence="8">
    <location>
        <begin position="817"/>
        <end position="819"/>
    </location>
</feature>
<feature type="strand" evidence="8">
    <location>
        <begin position="822"/>
        <end position="828"/>
    </location>
</feature>
<feature type="turn" evidence="8">
    <location>
        <begin position="829"/>
        <end position="831"/>
    </location>
</feature>
<feature type="strand" evidence="5">
    <location>
        <begin position="833"/>
        <end position="835"/>
    </location>
</feature>
<feature type="helix" evidence="8">
    <location>
        <begin position="837"/>
        <end position="856"/>
    </location>
</feature>
<feature type="strand" evidence="4">
    <location>
        <begin position="857"/>
        <end position="859"/>
    </location>
</feature>
<feature type="helix" evidence="8">
    <location>
        <begin position="861"/>
        <end position="882"/>
    </location>
</feature>
<feature type="helix" evidence="8">
    <location>
        <begin position="887"/>
        <end position="889"/>
    </location>
</feature>
<feature type="strand" evidence="8">
    <location>
        <begin position="892"/>
        <end position="895"/>
    </location>
</feature>
<feature type="strand" evidence="4">
    <location>
        <begin position="898"/>
        <end position="902"/>
    </location>
</feature>
<feature type="helix" evidence="8">
    <location>
        <begin position="906"/>
        <end position="917"/>
    </location>
</feature>
<feature type="strand" evidence="7">
    <location>
        <begin position="918"/>
        <end position="920"/>
    </location>
</feature>
<feature type="strand" evidence="8">
    <location>
        <begin position="927"/>
        <end position="935"/>
    </location>
</feature>
<feature type="helix" evidence="4">
    <location>
        <begin position="939"/>
        <end position="941"/>
    </location>
</feature>
<feature type="strand" evidence="5">
    <location>
        <begin position="943"/>
        <end position="947"/>
    </location>
</feature>
<feature type="helix" evidence="8">
    <location>
        <begin position="948"/>
        <end position="950"/>
    </location>
</feature>
<feature type="strand" evidence="8">
    <location>
        <begin position="951"/>
        <end position="954"/>
    </location>
</feature>
<feature type="strand" evidence="8">
    <location>
        <begin position="962"/>
        <end position="966"/>
    </location>
</feature>
<feature type="helix" evidence="8">
    <location>
        <begin position="968"/>
        <end position="983"/>
    </location>
</feature>
<feature type="helix" evidence="8">
    <location>
        <begin position="986"/>
        <end position="996"/>
    </location>
</feature>
<feature type="strand" evidence="8">
    <location>
        <begin position="997"/>
        <end position="999"/>
    </location>
</feature>
<keyword id="KW-0002">3D-structure</keyword>
<keyword id="KW-0233">DNA recombination</keyword>
<keyword id="KW-0235">DNA replication</keyword>
<keyword id="KW-0238">DNA-binding</keyword>
<keyword id="KW-0239">DNA-directed DNA polymerase</keyword>
<keyword id="KW-0244">Early protein</keyword>
<keyword id="KW-0378">Hydrolase</keyword>
<keyword id="KW-0511">Multifunctional enzyme</keyword>
<keyword id="KW-0548">Nucleotidyltransferase</keyword>
<keyword id="KW-1185">Reference proteome</keyword>
<keyword id="KW-0808">Transferase</keyword>
<keyword id="KW-1194">Viral DNA replication</keyword>
<sequence>MDVRCINWFESHGENRFLYLKSRCRNGETVFIRFPHYFYYVVTDEIYQSLSPPPFNARPMGKMRTIDIDETISYNLDIKDRKCSVADMWLIEEPKKRSIQNATMDEFLNISWFYISNGISPDGCYSLDEQYLTKINNGCYHCDDPRNCFAKEIPRFDIPRSYLFLDIECHFDKKFPSVFINPISHTSYCYIDLSGKRLLFTLINEEMLTEQEIQEAVDRGCLRIQSLMEMDYERELVLCSEIVLLRIAKQLLELTFDYVVTFNGHNFDLRYITNRLELLTGEKIIFRSPDKKEAVHLCIYERNQSSHKGVCGMANTTFHVNNNNGTIFFDLYSFIQKSEKLDSYKLDSISKNAFSCMGKVLNRGVREMTFIGDDTTDAKGKADTFAKVLTTGNYVTVDEDIICKVIRKDILENGFKVVLSCPTLPNDIYKLSFGKDDIDLAQMYKDYNLNIALDMARYCIHDACLCQYLWEYYGVETKTDAGAATYVLPQSMVFEYRASTIIKGPLLKLLLETKTILVRSETKQKFPYEGGKVFAPKQKMFSNNVLIFDYNSLYPNVCIFGNLSPETLVGVVVSTNRLEEEINNQLLLQKYPPPRYITVHCEPRLPNLISEIAIFDRSIEGTIPRLLRTFLAERARYKKMLKQATSSTEKAIYDSMQYTYKIVANSVYGLMGFRNSALYSYASAKSCTSIGRRMILYLESVLNGAELSNGMLRFANTLSNPFYMDDRDINPIVKTSLPIDYRFRFRSVYGDTDSVFTEIDSQDVDKSIEIAKELERLINSRVLFNNFKIEFEAVYKNLIMQSKKKYTTMKYSASSNSKSVPERINKGTSETRRDVSKFHKNMIKTYKTRLSEMLSEGRMNSNQVCIDILRSLETDLRSEFDSRSSPLELFMLSRMHHSNYKSADNPNMYLVTEYNKNNPETIELGERYYFAYICPANVPWTKKLVNIKTYETIIDRSFKLGSNQRIFYEVYFKRLTSEIVNLLDNKVLCISFFQRMFGSRPTFYEA</sequence>
<dbReference type="EC" id="2.7.7.7"/>
<dbReference type="EMBL" id="MT903340">
    <property type="protein sequence ID" value="QNP12927.1"/>
    <property type="molecule type" value="Genomic_DNA"/>
</dbReference>
<dbReference type="RefSeq" id="YP_010377054.1">
    <property type="nucleotide sequence ID" value="NC_063383.1"/>
</dbReference>
<dbReference type="PDB" id="8HDZ">
    <property type="method" value="EM"/>
    <property type="resolution" value="3.05 A"/>
    <property type="chains" value="A=1-1006"/>
</dbReference>
<dbReference type="PDB" id="8HG1">
    <property type="method" value="EM"/>
    <property type="resolution" value="2.80 A"/>
    <property type="chains" value="A=1-1006"/>
</dbReference>
<dbReference type="PDB" id="8HLZ">
    <property type="method" value="EM"/>
    <property type="resolution" value="3.50 A"/>
    <property type="chains" value="A/D=1-1006"/>
</dbReference>
<dbReference type="PDB" id="8HM0">
    <property type="method" value="EM"/>
    <property type="resolution" value="3.10 A"/>
    <property type="chains" value="A=1-1006"/>
</dbReference>
<dbReference type="PDB" id="8HOY">
    <property type="method" value="EM"/>
    <property type="resolution" value="2.76 A"/>
    <property type="chains" value="A=1-1006"/>
</dbReference>
<dbReference type="PDB" id="8HPA">
    <property type="method" value="EM"/>
    <property type="resolution" value="3.01 A"/>
    <property type="chains" value="A=1-1006"/>
</dbReference>
<dbReference type="PDB" id="8J86">
    <property type="method" value="EM"/>
    <property type="resolution" value="3.22 A"/>
    <property type="chains" value="A=1-1006"/>
</dbReference>
<dbReference type="PDB" id="8K8S">
    <property type="method" value="EM"/>
    <property type="resolution" value="3.06 A"/>
    <property type="chains" value="A=1-1006"/>
</dbReference>
<dbReference type="PDB" id="8K8U">
    <property type="method" value="EM"/>
    <property type="resolution" value="3.05 A"/>
    <property type="chains" value="A=1-1006"/>
</dbReference>
<dbReference type="PDB" id="8WPE">
    <property type="method" value="EM"/>
    <property type="resolution" value="2.70 A"/>
    <property type="chains" value="A=1-1006"/>
</dbReference>
<dbReference type="PDB" id="8WPF">
    <property type="method" value="EM"/>
    <property type="resolution" value="3.00 A"/>
    <property type="chains" value="A=1-1006"/>
</dbReference>
<dbReference type="PDB" id="8WPK">
    <property type="method" value="EM"/>
    <property type="resolution" value="2.70 A"/>
    <property type="chains" value="A=1-1006"/>
</dbReference>
<dbReference type="PDB" id="8WPP">
    <property type="method" value="EM"/>
    <property type="resolution" value="3.10 A"/>
    <property type="chains" value="A=1-1006"/>
</dbReference>
<dbReference type="PDB" id="9K9R">
    <property type="method" value="EM"/>
    <property type="resolution" value="2.61 A"/>
    <property type="chains" value="A=1-1006"/>
</dbReference>
<dbReference type="PDB" id="9K9S">
    <property type="method" value="EM"/>
    <property type="resolution" value="2.39 A"/>
    <property type="chains" value="A=1-1006"/>
</dbReference>
<dbReference type="PDB" id="9K9T">
    <property type="method" value="EM"/>
    <property type="resolution" value="2.96 A"/>
    <property type="chains" value="A=1-1006"/>
</dbReference>
<dbReference type="PDB" id="9K9U">
    <property type="method" value="EM"/>
    <property type="resolution" value="3.08 A"/>
    <property type="chains" value="A=1-1006"/>
</dbReference>
<dbReference type="PDB" id="9K9V">
    <property type="method" value="EM"/>
    <property type="resolution" value="3.00 A"/>
    <property type="chains" value="A=1-1006"/>
</dbReference>
<dbReference type="PDBsum" id="8HDZ"/>
<dbReference type="PDBsum" id="8HG1"/>
<dbReference type="PDBsum" id="8HLZ"/>
<dbReference type="PDBsum" id="8HM0"/>
<dbReference type="PDBsum" id="8HOY"/>
<dbReference type="PDBsum" id="8HPA"/>
<dbReference type="PDBsum" id="8J86"/>
<dbReference type="PDBsum" id="8K8S"/>
<dbReference type="PDBsum" id="8K8U"/>
<dbReference type="PDBsum" id="8WPE"/>
<dbReference type="PDBsum" id="8WPF"/>
<dbReference type="PDBsum" id="8WPK"/>
<dbReference type="PDBsum" id="8WPP"/>
<dbReference type="PDBsum" id="9K9R"/>
<dbReference type="PDBsum" id="9K9S"/>
<dbReference type="PDBsum" id="9K9T"/>
<dbReference type="PDBsum" id="9K9U"/>
<dbReference type="PDBsum" id="9K9V"/>
<dbReference type="EMDB" id="EMD-36960"/>
<dbReference type="EMDB" id="EMD-36962"/>
<dbReference type="EMDB" id="EMD-37714"/>
<dbReference type="EMDB" id="EMD-37715"/>
<dbReference type="EMDB" id="EMD-37717"/>
<dbReference type="EMDB" id="EMD-37722"/>
<dbReference type="EMDB" id="EMD-62196"/>
<dbReference type="EMDB" id="EMD-62197"/>
<dbReference type="EMDB" id="EMD-62198"/>
<dbReference type="EMDB" id="EMD-62199"/>
<dbReference type="EMDB" id="EMD-62200"/>
<dbReference type="SMR" id="A0A7H0DN44"/>
<dbReference type="GeneID" id="72551466"/>
<dbReference type="Proteomes" id="UP000516359">
    <property type="component" value="Genome"/>
</dbReference>
<dbReference type="GO" id="GO:0003677">
    <property type="term" value="F:DNA binding"/>
    <property type="evidence" value="ECO:0007669"/>
    <property type="project" value="UniProtKB-KW"/>
</dbReference>
<dbReference type="GO" id="GO:0003887">
    <property type="term" value="F:DNA-directed DNA polymerase activity"/>
    <property type="evidence" value="ECO:0007669"/>
    <property type="project" value="UniProtKB-KW"/>
</dbReference>
<dbReference type="GO" id="GO:0016787">
    <property type="term" value="F:hydrolase activity"/>
    <property type="evidence" value="ECO:0007669"/>
    <property type="project" value="UniProtKB-KW"/>
</dbReference>
<dbReference type="GO" id="GO:0000166">
    <property type="term" value="F:nucleotide binding"/>
    <property type="evidence" value="ECO:0007669"/>
    <property type="project" value="InterPro"/>
</dbReference>
<dbReference type="GO" id="GO:0006310">
    <property type="term" value="P:DNA recombination"/>
    <property type="evidence" value="ECO:0007669"/>
    <property type="project" value="UniProtKB-KW"/>
</dbReference>
<dbReference type="GO" id="GO:0006260">
    <property type="term" value="P:DNA replication"/>
    <property type="evidence" value="ECO:0007669"/>
    <property type="project" value="UniProtKB-KW"/>
</dbReference>
<dbReference type="GO" id="GO:0039693">
    <property type="term" value="P:viral DNA genome replication"/>
    <property type="evidence" value="ECO:0007669"/>
    <property type="project" value="UniProtKB-KW"/>
</dbReference>
<dbReference type="FunFam" id="1.10.287.690:FF:000010">
    <property type="entry name" value="DNA polymerase"/>
    <property type="match status" value="1"/>
</dbReference>
<dbReference type="Gene3D" id="1.10.287.690">
    <property type="entry name" value="Helix hairpin bin"/>
    <property type="match status" value="1"/>
</dbReference>
<dbReference type="Gene3D" id="3.90.1600.10">
    <property type="entry name" value="Palm domain of DNA polymerase"/>
    <property type="match status" value="2"/>
</dbReference>
<dbReference type="Gene3D" id="3.30.420.10">
    <property type="entry name" value="Ribonuclease H-like superfamily/Ribonuclease H"/>
    <property type="match status" value="1"/>
</dbReference>
<dbReference type="InterPro" id="IPR006172">
    <property type="entry name" value="DNA-dir_DNA_pol_B"/>
</dbReference>
<dbReference type="InterPro" id="IPR017964">
    <property type="entry name" value="DNA-dir_DNA_pol_B_CS"/>
</dbReference>
<dbReference type="InterPro" id="IPR006133">
    <property type="entry name" value="DNA-dir_DNA_pol_B_exonuc"/>
</dbReference>
<dbReference type="InterPro" id="IPR006134">
    <property type="entry name" value="DNA-dir_DNA_pol_B_multi_dom"/>
</dbReference>
<dbReference type="InterPro" id="IPR013617">
    <property type="entry name" value="DNA-dir_DNA_pol_B_vir_insert"/>
</dbReference>
<dbReference type="InterPro" id="IPR043502">
    <property type="entry name" value="DNA/RNA_pol_sf"/>
</dbReference>
<dbReference type="InterPro" id="IPR023211">
    <property type="entry name" value="DNA_pol_palm_dom_sf"/>
</dbReference>
<dbReference type="InterPro" id="IPR050240">
    <property type="entry name" value="DNA_pol_type-B"/>
</dbReference>
<dbReference type="InterPro" id="IPR013660">
    <property type="entry name" value="DNApol_B_exo_N"/>
</dbReference>
<dbReference type="InterPro" id="IPR012337">
    <property type="entry name" value="RNaseH-like_sf"/>
</dbReference>
<dbReference type="InterPro" id="IPR036397">
    <property type="entry name" value="RNaseH_sf"/>
</dbReference>
<dbReference type="PANTHER" id="PTHR10322">
    <property type="entry name" value="DNA POLYMERASE CATALYTIC SUBUNIT"/>
    <property type="match status" value="1"/>
</dbReference>
<dbReference type="PANTHER" id="PTHR10322:SF23">
    <property type="entry name" value="DNA POLYMERASE DELTA CATALYTIC SUBUNIT"/>
    <property type="match status" value="1"/>
</dbReference>
<dbReference type="Pfam" id="PF00136">
    <property type="entry name" value="DNA_pol_B"/>
    <property type="match status" value="1"/>
</dbReference>
<dbReference type="Pfam" id="PF08408">
    <property type="entry name" value="DNA_pol_B_3"/>
    <property type="match status" value="1"/>
</dbReference>
<dbReference type="Pfam" id="PF03104">
    <property type="entry name" value="DNA_pol_B_exo1"/>
    <property type="match status" value="1"/>
</dbReference>
<dbReference type="Pfam" id="PF08452">
    <property type="entry name" value="DNAP_B_exo_N"/>
    <property type="match status" value="1"/>
</dbReference>
<dbReference type="PRINTS" id="PR00106">
    <property type="entry name" value="DNAPOLB"/>
</dbReference>
<dbReference type="SMART" id="SM00486">
    <property type="entry name" value="POLBc"/>
    <property type="match status" value="1"/>
</dbReference>
<dbReference type="SUPFAM" id="SSF56672">
    <property type="entry name" value="DNA/RNA polymerases"/>
    <property type="match status" value="1"/>
</dbReference>
<dbReference type="SUPFAM" id="SSF53098">
    <property type="entry name" value="Ribonuclease H-like"/>
    <property type="match status" value="1"/>
</dbReference>
<dbReference type="PROSITE" id="PS00116">
    <property type="entry name" value="DNA_POLYMERASE_B"/>
    <property type="match status" value="1"/>
</dbReference>
<organism>
    <name type="scientific">Monkeypox virus</name>
    <dbReference type="NCBI Taxonomy" id="10244"/>
    <lineage>
        <taxon>Viruses</taxon>
        <taxon>Varidnaviria</taxon>
        <taxon>Bamfordvirae</taxon>
        <taxon>Nucleocytoviricota</taxon>
        <taxon>Pokkesviricetes</taxon>
        <taxon>Chitovirales</taxon>
        <taxon>Poxviridae</taxon>
        <taxon>Chordopoxvirinae</taxon>
        <taxon>Orthopoxvirus</taxon>
    </lineage>
</organism>
<protein>
    <recommendedName>
        <fullName>DNA polymerase</fullName>
        <ecNumber>2.7.7.7</ecNumber>
    </recommendedName>
</protein>
<gene>
    <name type="primary">OPG071</name>
    <name type="synonym">POL</name>
    <name type="ORF">MPXVgp056</name>
</gene>
<organismHost>
    <name type="scientific">Cynomys gunnisoni</name>
    <name type="common">Gunnison's prairie dog</name>
    <name type="synonym">Spermophilus gunnisoni</name>
    <dbReference type="NCBI Taxonomy" id="45479"/>
</organismHost>
<organismHost>
    <name type="scientific">Cynomys leucurus</name>
    <name type="common">White-tailed prairie dog</name>
    <dbReference type="NCBI Taxonomy" id="99825"/>
</organismHost>
<organismHost>
    <name type="scientific">Cynomys ludovicianus</name>
    <name type="common">Black-tailed prairie dog</name>
    <dbReference type="NCBI Taxonomy" id="45480"/>
</organismHost>
<organismHost>
    <name type="scientific">Cynomys mexicanus</name>
    <name type="common">Mexican prairie dog</name>
    <dbReference type="NCBI Taxonomy" id="99826"/>
</organismHost>
<organismHost>
    <name type="scientific">Cynomys parvidens</name>
    <name type="common">Utah prairie dog</name>
    <dbReference type="NCBI Taxonomy" id="99827"/>
</organismHost>
<organismHost>
    <name type="scientific">Gliridae</name>
    <name type="common">dormice</name>
    <dbReference type="NCBI Taxonomy" id="30650"/>
</organismHost>
<organismHost>
    <name type="scientific">Heliosciurus ruwenzorii</name>
    <name type="common">Ruwenzori sun squirrel</name>
    <dbReference type="NCBI Taxonomy" id="226685"/>
</organismHost>
<organismHost>
    <name type="scientific">Homo sapiens</name>
    <name type="common">Human</name>
    <dbReference type="NCBI Taxonomy" id="9606"/>
</organismHost>
<organismHost>
    <name type="scientific">Mus musculus</name>
    <name type="common">Mouse</name>
    <dbReference type="NCBI Taxonomy" id="10090"/>
</organismHost>
<evidence type="ECO:0000250" key="1">
    <source>
        <dbReference type="UniProtKB" id="P06856"/>
    </source>
</evidence>
<evidence type="ECO:0000305" key="2"/>
<evidence type="ECO:0007829" key="3">
    <source>
        <dbReference type="PDB" id="8HLZ"/>
    </source>
</evidence>
<evidence type="ECO:0007829" key="4">
    <source>
        <dbReference type="PDB" id="8HOY"/>
    </source>
</evidence>
<evidence type="ECO:0007829" key="5">
    <source>
        <dbReference type="PDB" id="8HPA"/>
    </source>
</evidence>
<evidence type="ECO:0007829" key="6">
    <source>
        <dbReference type="PDB" id="8J86"/>
    </source>
</evidence>
<evidence type="ECO:0007829" key="7">
    <source>
        <dbReference type="PDB" id="8K8S"/>
    </source>
</evidence>
<evidence type="ECO:0007829" key="8">
    <source>
        <dbReference type="PDB" id="8WPE"/>
    </source>
</evidence>
<comment type="function">
    <text evidence="1">Catalyzes DNA synthesis. Acquires processivity by associating with a heterodimeric processivity factor comprised of the viral OPG148 and OPG116 proteins, thereby forming the DNA polymerase holoenzyme. Displays 3'- to 5' exonuclease activity. Might participate in viral DNA recombination. Does not perform OPG116/D4synthesis across an abasic site.</text>
</comment>
<comment type="catalytic activity">
    <reaction evidence="1">
        <text>DNA(n) + a 2'-deoxyribonucleoside 5'-triphosphate = DNA(n+1) + diphosphate</text>
        <dbReference type="Rhea" id="RHEA:22508"/>
        <dbReference type="Rhea" id="RHEA-COMP:17339"/>
        <dbReference type="Rhea" id="RHEA-COMP:17340"/>
        <dbReference type="ChEBI" id="CHEBI:33019"/>
        <dbReference type="ChEBI" id="CHEBI:61560"/>
        <dbReference type="ChEBI" id="CHEBI:173112"/>
        <dbReference type="EC" id="2.7.7.7"/>
    </reaction>
</comment>
<comment type="subunit">
    <text evidence="1">Interacts with OPG148. Component of the Uracil-DNA glycosylase(UDG)-OPG148-polymerase complex; OPG148 and OPG116/UDG form a heterodimeric processivity factor that associates with OPG071 to form the processive polymerase holoenzyme.</text>
</comment>
<comment type="induction">
    <text evidence="1">Expressed in the early phase of the viral replicative cycle.</text>
</comment>
<comment type="similarity">
    <text evidence="2">Belongs to the DNA polymerase type-B family.</text>
</comment>
<proteinExistence type="evidence at protein level"/>
<accession>A0A7H0DN44</accession>
<reference key="1">
    <citation type="journal article" date="2022" name="J. Infect. Dis.">
        <title>Exportation of Monkeypox virus from the African continent.</title>
        <authorList>
            <person name="Mauldin M.R."/>
            <person name="McCollum A.M."/>
            <person name="Nakazawa Y.J."/>
            <person name="Mandra A."/>
            <person name="Whitehouse E.R."/>
            <person name="Davidson W."/>
            <person name="Zhao H."/>
            <person name="Gao J."/>
            <person name="Li Y."/>
            <person name="Doty J."/>
            <person name="Yinka-Ogunleye A."/>
            <person name="Akinpelu A."/>
            <person name="Aruna O."/>
            <person name="Naidoo D."/>
            <person name="Lewandowski K."/>
            <person name="Afrough B."/>
            <person name="Graham V."/>
            <person name="Aarons E."/>
            <person name="Hewson R."/>
            <person name="Vipond R."/>
            <person name="Dunning J."/>
            <person name="Chand M."/>
            <person name="Brown C."/>
            <person name="Cohen-Gihon I."/>
            <person name="Erez N."/>
            <person name="Shifman O."/>
            <person name="Israeli O."/>
            <person name="Sharon M."/>
            <person name="Schwartz E."/>
            <person name="Beth-Din A."/>
            <person name="Zvi A."/>
            <person name="Mak T.M."/>
            <person name="Ng Y.K."/>
            <person name="Cui L."/>
            <person name="Lin R.T.P."/>
            <person name="Olson V.A."/>
            <person name="Brooks T."/>
            <person name="Paran N."/>
            <person name="Ihekweazu C."/>
            <person name="Reynolds M.G."/>
        </authorList>
    </citation>
    <scope>NUCLEOTIDE SEQUENCE [LARGE SCALE GENOMIC DNA]</scope>
    <source>
        <strain>MPXV-M5312_HM12_Rivers</strain>
    </source>
</reference>